<gene>
    <name type="primary">ydeA</name>
    <name type="ordered locus">BSU05110</name>
</gene>
<organism>
    <name type="scientific">Bacillus subtilis (strain 168)</name>
    <dbReference type="NCBI Taxonomy" id="224308"/>
    <lineage>
        <taxon>Bacteria</taxon>
        <taxon>Bacillati</taxon>
        <taxon>Bacillota</taxon>
        <taxon>Bacilli</taxon>
        <taxon>Bacillales</taxon>
        <taxon>Bacillaceae</taxon>
        <taxon>Bacillus</taxon>
    </lineage>
</organism>
<evidence type="ECO:0000250" key="1"/>
<evidence type="ECO:0000305" key="2"/>
<evidence type="ECO:0007829" key="3">
    <source>
        <dbReference type="PDB" id="3F5D"/>
    </source>
</evidence>
<dbReference type="EC" id="3.2.-.-"/>
<dbReference type="EMBL" id="AB001488">
    <property type="protein sequence ID" value="BAA19347.1"/>
    <property type="molecule type" value="Genomic_DNA"/>
</dbReference>
<dbReference type="EMBL" id="AL009126">
    <property type="protein sequence ID" value="CAB12318.1"/>
    <property type="molecule type" value="Genomic_DNA"/>
</dbReference>
<dbReference type="PIR" id="C69777">
    <property type="entry name" value="C69777"/>
</dbReference>
<dbReference type="RefSeq" id="WP_003234249.1">
    <property type="nucleotide sequence ID" value="NZ_OZ025638.1"/>
</dbReference>
<dbReference type="PDB" id="3F5D">
    <property type="method" value="X-ray"/>
    <property type="resolution" value="2.06 A"/>
    <property type="chains" value="A=2-196"/>
</dbReference>
<dbReference type="PDBsum" id="3F5D"/>
<dbReference type="SMR" id="P96658"/>
<dbReference type="FunCoup" id="P96658">
    <property type="interactions" value="50"/>
</dbReference>
<dbReference type="STRING" id="224308.BSU05110"/>
<dbReference type="PaxDb" id="224308-BSU05110"/>
<dbReference type="DNASU" id="939914"/>
<dbReference type="EnsemblBacteria" id="CAB12318">
    <property type="protein sequence ID" value="CAB12318"/>
    <property type="gene ID" value="BSU_05110"/>
</dbReference>
<dbReference type="GeneID" id="939914"/>
<dbReference type="KEGG" id="bsu:BSU05110"/>
<dbReference type="PATRIC" id="fig|224308.179.peg.545"/>
<dbReference type="eggNOG" id="COG0693">
    <property type="taxonomic scope" value="Bacteria"/>
</dbReference>
<dbReference type="InParanoid" id="P96658"/>
<dbReference type="OrthoDB" id="6003696at2"/>
<dbReference type="PhylomeDB" id="P96658"/>
<dbReference type="BioCyc" id="BSUB:BSU05110-MONOMER"/>
<dbReference type="EvolutionaryTrace" id="P96658"/>
<dbReference type="Proteomes" id="UP000001570">
    <property type="component" value="Chromosome"/>
</dbReference>
<dbReference type="GO" id="GO:0005737">
    <property type="term" value="C:cytoplasm"/>
    <property type="evidence" value="ECO:0000318"/>
    <property type="project" value="GO_Central"/>
</dbReference>
<dbReference type="GO" id="GO:0008233">
    <property type="term" value="F:peptidase activity"/>
    <property type="evidence" value="ECO:0007669"/>
    <property type="project" value="UniProtKB-KW"/>
</dbReference>
<dbReference type="GO" id="GO:0006508">
    <property type="term" value="P:proteolysis"/>
    <property type="evidence" value="ECO:0007669"/>
    <property type="project" value="UniProtKB-KW"/>
</dbReference>
<dbReference type="CDD" id="cd03140">
    <property type="entry name" value="GATase1_PfpI_3"/>
    <property type="match status" value="1"/>
</dbReference>
<dbReference type="Gene3D" id="3.40.50.880">
    <property type="match status" value="1"/>
</dbReference>
<dbReference type="InterPro" id="IPR029062">
    <property type="entry name" value="Class_I_gatase-like"/>
</dbReference>
<dbReference type="InterPro" id="IPR002818">
    <property type="entry name" value="DJ-1/PfpI"/>
</dbReference>
<dbReference type="InterPro" id="IPR050325">
    <property type="entry name" value="Prot/Nucl_acid_deglycase"/>
</dbReference>
<dbReference type="PANTHER" id="PTHR48094:SF19">
    <property type="entry name" value="DJ-1_PFPI DOMAIN-CONTAINING PROTEIN"/>
    <property type="match status" value="1"/>
</dbReference>
<dbReference type="PANTHER" id="PTHR48094">
    <property type="entry name" value="PROTEIN/NUCLEIC ACID DEGLYCASE DJ-1-RELATED"/>
    <property type="match status" value="1"/>
</dbReference>
<dbReference type="Pfam" id="PF01965">
    <property type="entry name" value="DJ-1_PfpI"/>
    <property type="match status" value="1"/>
</dbReference>
<dbReference type="SUPFAM" id="SSF52317">
    <property type="entry name" value="Class I glutamine amidotransferase-like"/>
    <property type="match status" value="1"/>
</dbReference>
<accession>P96658</accession>
<accession>Q797I9</accession>
<name>YDEA_BACSU</name>
<protein>
    <recommendedName>
        <fullName>Uncharacterized protease YdeA</fullName>
        <ecNumber>3.2.-.-</ecNumber>
    </recommendedName>
</protein>
<keyword id="KW-0002">3D-structure</keyword>
<keyword id="KW-0378">Hydrolase</keyword>
<keyword id="KW-0645">Protease</keyword>
<keyword id="KW-1185">Reference proteome</keyword>
<reference key="1">
    <citation type="submission" date="1997-03" db="EMBL/GenBank/DDBJ databases">
        <title>A 148 kbp sequence of the region between 35 and 47 degree of the Bacillus subtilis genome.</title>
        <authorList>
            <person name="Kasahara Y."/>
            <person name="Nakai S."/>
            <person name="Lee S."/>
            <person name="Sadaie Y."/>
            <person name="Ogasawara N."/>
        </authorList>
    </citation>
    <scope>NUCLEOTIDE SEQUENCE [GENOMIC DNA]</scope>
    <source>
        <strain>168</strain>
    </source>
</reference>
<reference key="2">
    <citation type="journal article" date="1997" name="Nature">
        <title>The complete genome sequence of the Gram-positive bacterium Bacillus subtilis.</title>
        <authorList>
            <person name="Kunst F."/>
            <person name="Ogasawara N."/>
            <person name="Moszer I."/>
            <person name="Albertini A.M."/>
            <person name="Alloni G."/>
            <person name="Azevedo V."/>
            <person name="Bertero M.G."/>
            <person name="Bessieres P."/>
            <person name="Bolotin A."/>
            <person name="Borchert S."/>
            <person name="Borriss R."/>
            <person name="Boursier L."/>
            <person name="Brans A."/>
            <person name="Braun M."/>
            <person name="Brignell S.C."/>
            <person name="Bron S."/>
            <person name="Brouillet S."/>
            <person name="Bruschi C.V."/>
            <person name="Caldwell B."/>
            <person name="Capuano V."/>
            <person name="Carter N.M."/>
            <person name="Choi S.-K."/>
            <person name="Codani J.-J."/>
            <person name="Connerton I.F."/>
            <person name="Cummings N.J."/>
            <person name="Daniel R.A."/>
            <person name="Denizot F."/>
            <person name="Devine K.M."/>
            <person name="Duesterhoeft A."/>
            <person name="Ehrlich S.D."/>
            <person name="Emmerson P.T."/>
            <person name="Entian K.-D."/>
            <person name="Errington J."/>
            <person name="Fabret C."/>
            <person name="Ferrari E."/>
            <person name="Foulger D."/>
            <person name="Fritz C."/>
            <person name="Fujita M."/>
            <person name="Fujita Y."/>
            <person name="Fuma S."/>
            <person name="Galizzi A."/>
            <person name="Galleron N."/>
            <person name="Ghim S.-Y."/>
            <person name="Glaser P."/>
            <person name="Goffeau A."/>
            <person name="Golightly E.J."/>
            <person name="Grandi G."/>
            <person name="Guiseppi G."/>
            <person name="Guy B.J."/>
            <person name="Haga K."/>
            <person name="Haiech J."/>
            <person name="Harwood C.R."/>
            <person name="Henaut A."/>
            <person name="Hilbert H."/>
            <person name="Holsappel S."/>
            <person name="Hosono S."/>
            <person name="Hullo M.-F."/>
            <person name="Itaya M."/>
            <person name="Jones L.-M."/>
            <person name="Joris B."/>
            <person name="Karamata D."/>
            <person name="Kasahara Y."/>
            <person name="Klaerr-Blanchard M."/>
            <person name="Klein C."/>
            <person name="Kobayashi Y."/>
            <person name="Koetter P."/>
            <person name="Koningstein G."/>
            <person name="Krogh S."/>
            <person name="Kumano M."/>
            <person name="Kurita K."/>
            <person name="Lapidus A."/>
            <person name="Lardinois S."/>
            <person name="Lauber J."/>
            <person name="Lazarevic V."/>
            <person name="Lee S.-M."/>
            <person name="Levine A."/>
            <person name="Liu H."/>
            <person name="Masuda S."/>
            <person name="Mauel C."/>
            <person name="Medigue C."/>
            <person name="Medina N."/>
            <person name="Mellado R.P."/>
            <person name="Mizuno M."/>
            <person name="Moestl D."/>
            <person name="Nakai S."/>
            <person name="Noback M."/>
            <person name="Noone D."/>
            <person name="O'Reilly M."/>
            <person name="Ogawa K."/>
            <person name="Ogiwara A."/>
            <person name="Oudega B."/>
            <person name="Park S.-H."/>
            <person name="Parro V."/>
            <person name="Pohl T.M."/>
            <person name="Portetelle D."/>
            <person name="Porwollik S."/>
            <person name="Prescott A.M."/>
            <person name="Presecan E."/>
            <person name="Pujic P."/>
            <person name="Purnelle B."/>
            <person name="Rapoport G."/>
            <person name="Rey M."/>
            <person name="Reynolds S."/>
            <person name="Rieger M."/>
            <person name="Rivolta C."/>
            <person name="Rocha E."/>
            <person name="Roche B."/>
            <person name="Rose M."/>
            <person name="Sadaie Y."/>
            <person name="Sato T."/>
            <person name="Scanlan E."/>
            <person name="Schleich S."/>
            <person name="Schroeter R."/>
            <person name="Scoffone F."/>
            <person name="Sekiguchi J."/>
            <person name="Sekowska A."/>
            <person name="Seror S.J."/>
            <person name="Serror P."/>
            <person name="Shin B.-S."/>
            <person name="Soldo B."/>
            <person name="Sorokin A."/>
            <person name="Tacconi E."/>
            <person name="Takagi T."/>
            <person name="Takahashi H."/>
            <person name="Takemaru K."/>
            <person name="Takeuchi M."/>
            <person name="Tamakoshi A."/>
            <person name="Tanaka T."/>
            <person name="Terpstra P."/>
            <person name="Tognoni A."/>
            <person name="Tosato V."/>
            <person name="Uchiyama S."/>
            <person name="Vandenbol M."/>
            <person name="Vannier F."/>
            <person name="Vassarotti A."/>
            <person name="Viari A."/>
            <person name="Wambutt R."/>
            <person name="Wedler E."/>
            <person name="Wedler H."/>
            <person name="Weitzenegger T."/>
            <person name="Winters P."/>
            <person name="Wipat A."/>
            <person name="Yamamoto H."/>
            <person name="Yamane K."/>
            <person name="Yasumoto K."/>
            <person name="Yata K."/>
            <person name="Yoshida K."/>
            <person name="Yoshikawa H.-F."/>
            <person name="Zumstein E."/>
            <person name="Yoshikawa H."/>
            <person name="Danchin A."/>
        </authorList>
    </citation>
    <scope>NUCLEOTIDE SEQUENCE [LARGE SCALE GENOMIC DNA]</scope>
    <source>
        <strain>168</strain>
    </source>
</reference>
<reference key="3">
    <citation type="submission" date="2009-02" db="PDB data bank">
        <title>Crystal structure of a protein of unknown function from Bacillus subtilis.</title>
        <authorList>
            <consortium name="New York structural genomics research consortium (NYSGRC)"/>
        </authorList>
    </citation>
    <scope>X-RAY CRYSTALLOGRAPHY (2.06 ANGSTROMS) OF 2-196</scope>
</reference>
<proteinExistence type="evidence at protein level"/>
<comment type="similarity">
    <text evidence="2">Belongs to the peptidase C56 family.</text>
</comment>
<feature type="chain" id="PRO_0000388349" description="Uncharacterized protease YdeA">
    <location>
        <begin position="1"/>
        <end position="197"/>
    </location>
</feature>
<feature type="domain" description="PfpI endopeptidase">
    <location>
        <begin position="29" status="uncertain"/>
        <end position="166" status="uncertain"/>
    </location>
</feature>
<feature type="active site" description="Nucleophile" evidence="1">
    <location>
        <position position="98"/>
    </location>
</feature>
<feature type="strand" evidence="3">
    <location>
        <begin position="2"/>
        <end position="7"/>
    </location>
</feature>
<feature type="strand" evidence="3">
    <location>
        <begin position="10"/>
        <end position="12"/>
    </location>
</feature>
<feature type="helix" evidence="3">
    <location>
        <begin position="18"/>
        <end position="25"/>
    </location>
</feature>
<feature type="strand" evidence="3">
    <location>
        <begin position="30"/>
        <end position="43"/>
    </location>
</feature>
<feature type="strand" evidence="3">
    <location>
        <begin position="48"/>
        <end position="50"/>
    </location>
</feature>
<feature type="strand" evidence="3">
    <location>
        <begin position="52"/>
        <end position="54"/>
    </location>
</feature>
<feature type="strand" evidence="3">
    <location>
        <begin position="63"/>
        <end position="67"/>
    </location>
</feature>
<feature type="helix" evidence="3">
    <location>
        <begin position="78"/>
        <end position="89"/>
    </location>
</feature>
<feature type="strand" evidence="3">
    <location>
        <begin position="94"/>
        <end position="97"/>
    </location>
</feature>
<feature type="helix" evidence="3">
    <location>
        <begin position="99"/>
        <end position="106"/>
    </location>
</feature>
<feature type="turn" evidence="3">
    <location>
        <begin position="107"/>
        <end position="112"/>
    </location>
</feature>
<feature type="helix" evidence="3">
    <location>
        <begin position="120"/>
        <end position="123"/>
    </location>
</feature>
<feature type="strand" evidence="3">
    <location>
        <begin position="138"/>
        <end position="143"/>
    </location>
</feature>
<feature type="strand" evidence="3">
    <location>
        <begin position="146"/>
        <end position="149"/>
    </location>
</feature>
<feature type="helix" evidence="3">
    <location>
        <begin position="154"/>
        <end position="164"/>
    </location>
</feature>
<feature type="helix" evidence="3">
    <location>
        <begin position="170"/>
        <end position="182"/>
    </location>
</feature>
<feature type="helix" evidence="3">
    <location>
        <begin position="184"/>
        <end position="191"/>
    </location>
</feature>
<sequence>MKKALFLILDQYADWEGVYLASALNQREDWSVHTVSLDPIVSSIGGFKTSVDYIIGLEPANFNLLVMIGGDSWSNDNKKLLHFVKTAFQKNIPIAAICGAVDFLAKNGLLNNHSHTGNFVYLWKDYKQYKPISSFVEKQAVRDKNLVTANGTAPIEFTNLILEMIDFDTPENIEKMMYMNRYGFYHFCDKYGNPFVD</sequence>